<gene>
    <name evidence="1" type="primary">lysS</name>
    <name type="ordered locus">mll5634</name>
</gene>
<proteinExistence type="inferred from homology"/>
<keyword id="KW-0030">Aminoacyl-tRNA synthetase</keyword>
<keyword id="KW-0067">ATP-binding</keyword>
<keyword id="KW-0963">Cytoplasm</keyword>
<keyword id="KW-0436">Ligase</keyword>
<keyword id="KW-0547">Nucleotide-binding</keyword>
<keyword id="KW-0648">Protein biosynthesis</keyword>
<name>SYK_RHILO</name>
<accession>Q98BC8</accession>
<dbReference type="EC" id="6.1.1.6" evidence="1"/>
<dbReference type="EMBL" id="BA000012">
    <property type="protein sequence ID" value="BAB52044.1"/>
    <property type="molecule type" value="Genomic_DNA"/>
</dbReference>
<dbReference type="RefSeq" id="WP_010913382.1">
    <property type="nucleotide sequence ID" value="NC_002678.2"/>
</dbReference>
<dbReference type="SMR" id="Q98BC8"/>
<dbReference type="KEGG" id="mlo:mll5634"/>
<dbReference type="PATRIC" id="fig|266835.9.peg.4475"/>
<dbReference type="eggNOG" id="COG1384">
    <property type="taxonomic scope" value="Bacteria"/>
</dbReference>
<dbReference type="HOGENOM" id="CLU_025562_2_0_5"/>
<dbReference type="Proteomes" id="UP000000552">
    <property type="component" value="Chromosome"/>
</dbReference>
<dbReference type="GO" id="GO:0005737">
    <property type="term" value="C:cytoplasm"/>
    <property type="evidence" value="ECO:0007669"/>
    <property type="project" value="UniProtKB-SubCell"/>
</dbReference>
<dbReference type="GO" id="GO:0005524">
    <property type="term" value="F:ATP binding"/>
    <property type="evidence" value="ECO:0007669"/>
    <property type="project" value="UniProtKB-UniRule"/>
</dbReference>
<dbReference type="GO" id="GO:0004824">
    <property type="term" value="F:lysine-tRNA ligase activity"/>
    <property type="evidence" value="ECO:0007669"/>
    <property type="project" value="UniProtKB-UniRule"/>
</dbReference>
<dbReference type="GO" id="GO:0000049">
    <property type="term" value="F:tRNA binding"/>
    <property type="evidence" value="ECO:0007669"/>
    <property type="project" value="InterPro"/>
</dbReference>
<dbReference type="GO" id="GO:0006430">
    <property type="term" value="P:lysyl-tRNA aminoacylation"/>
    <property type="evidence" value="ECO:0007669"/>
    <property type="project" value="UniProtKB-UniRule"/>
</dbReference>
<dbReference type="Gene3D" id="1.10.10.350">
    <property type="match status" value="1"/>
</dbReference>
<dbReference type="Gene3D" id="3.40.50.620">
    <property type="entry name" value="HUPs"/>
    <property type="match status" value="2"/>
</dbReference>
<dbReference type="HAMAP" id="MF_00177">
    <property type="entry name" value="Lys_tRNA_synth_class1"/>
    <property type="match status" value="1"/>
</dbReference>
<dbReference type="InterPro" id="IPR020751">
    <property type="entry name" value="aa-tRNA-synth_I_codon-bd_sub2"/>
</dbReference>
<dbReference type="InterPro" id="IPR001412">
    <property type="entry name" value="aa-tRNA-synth_I_CS"/>
</dbReference>
<dbReference type="InterPro" id="IPR008925">
    <property type="entry name" value="aa_tRNA-synth_I_cd-bd_sf"/>
</dbReference>
<dbReference type="InterPro" id="IPR002904">
    <property type="entry name" value="Lys-tRNA-ligase"/>
</dbReference>
<dbReference type="InterPro" id="IPR014729">
    <property type="entry name" value="Rossmann-like_a/b/a_fold"/>
</dbReference>
<dbReference type="NCBIfam" id="TIGR00467">
    <property type="entry name" value="lysS_arch"/>
    <property type="match status" value="1"/>
</dbReference>
<dbReference type="NCBIfam" id="NF001968">
    <property type="entry name" value="PRK00750.1-2"/>
    <property type="match status" value="1"/>
</dbReference>
<dbReference type="PANTHER" id="PTHR37940">
    <property type="entry name" value="LYSINE--TRNA LIGASE"/>
    <property type="match status" value="1"/>
</dbReference>
<dbReference type="PANTHER" id="PTHR37940:SF1">
    <property type="entry name" value="LYSINE--TRNA LIGASE"/>
    <property type="match status" value="1"/>
</dbReference>
<dbReference type="Pfam" id="PF01921">
    <property type="entry name" value="tRNA-synt_1f"/>
    <property type="match status" value="1"/>
</dbReference>
<dbReference type="SUPFAM" id="SSF48163">
    <property type="entry name" value="An anticodon-binding domain of class I aminoacyl-tRNA synthetases"/>
    <property type="match status" value="1"/>
</dbReference>
<dbReference type="SUPFAM" id="SSF52374">
    <property type="entry name" value="Nucleotidylyl transferase"/>
    <property type="match status" value="1"/>
</dbReference>
<dbReference type="PROSITE" id="PS00178">
    <property type="entry name" value="AA_TRNA_LIGASE_I"/>
    <property type="match status" value="1"/>
</dbReference>
<sequence>MAGSNTIDLNPELLAAAAESKAWPFEEAKKIIERYKGGEFPETILFETGYGPSGLPHIGTFGEVARTSMVRHAFRVLTQDKVATKLLCFSDDMDGMRKIPDNVPDRAALEPHLHKPLSSVPNPFGGDYASFADHNNAMLCRFLDTFGFDYEFASATQYYKSGRFDAMLLRAAERYDKIMAVMLPTLGPERQATYSPFLPISPKSGRVLYVPMKHVDAKAGTITFDDEGTETTLSITGGRVKLQWKPDFGMRWAALGVDFEMFGKDHQTNAVVYDRICNILGGRAPEHFVYELFLDENGQKISKSKGNGLTIDEWLTYAPTESLGLYMYQRPRQAKKLYFDVIPRAVDEYYTFLGAYPRQDWKERLGNPVWHMHDGNPPAIDMPVPFSLLLNLVSASNAQNKDVLWGFISRHTQGVTPKTHPELDQLVGHAIRYFDDFVRPTKTFRAADEVEREALEALDAALGALPADAGGEAIQNASLNVARKIERYQDHSKQSPEGGPGVSGAFFQMIYQVLIGQERGPRFGSFAALYGVAETRALIQQALAGQLA</sequence>
<evidence type="ECO:0000255" key="1">
    <source>
        <dbReference type="HAMAP-Rule" id="MF_00177"/>
    </source>
</evidence>
<reference key="1">
    <citation type="journal article" date="2000" name="DNA Res.">
        <title>Complete genome structure of the nitrogen-fixing symbiotic bacterium Mesorhizobium loti.</title>
        <authorList>
            <person name="Kaneko T."/>
            <person name="Nakamura Y."/>
            <person name="Sato S."/>
            <person name="Asamizu E."/>
            <person name="Kato T."/>
            <person name="Sasamoto S."/>
            <person name="Watanabe A."/>
            <person name="Idesawa K."/>
            <person name="Ishikawa A."/>
            <person name="Kawashima K."/>
            <person name="Kimura T."/>
            <person name="Kishida Y."/>
            <person name="Kiyokawa C."/>
            <person name="Kohara M."/>
            <person name="Matsumoto M."/>
            <person name="Matsuno A."/>
            <person name="Mochizuki Y."/>
            <person name="Nakayama S."/>
            <person name="Nakazaki N."/>
            <person name="Shimpo S."/>
            <person name="Sugimoto M."/>
            <person name="Takeuchi C."/>
            <person name="Yamada M."/>
            <person name="Tabata S."/>
        </authorList>
    </citation>
    <scope>NUCLEOTIDE SEQUENCE [LARGE SCALE GENOMIC DNA]</scope>
    <source>
        <strain>LMG 29417 / CECT 9101 / MAFF 303099</strain>
    </source>
</reference>
<organism>
    <name type="scientific">Mesorhizobium japonicum (strain LMG 29417 / CECT 9101 / MAFF 303099)</name>
    <name type="common">Mesorhizobium loti (strain MAFF 303099)</name>
    <dbReference type="NCBI Taxonomy" id="266835"/>
    <lineage>
        <taxon>Bacteria</taxon>
        <taxon>Pseudomonadati</taxon>
        <taxon>Pseudomonadota</taxon>
        <taxon>Alphaproteobacteria</taxon>
        <taxon>Hyphomicrobiales</taxon>
        <taxon>Phyllobacteriaceae</taxon>
        <taxon>Mesorhizobium</taxon>
    </lineage>
</organism>
<protein>
    <recommendedName>
        <fullName evidence="1">Lysine--tRNA ligase</fullName>
        <ecNumber evidence="1">6.1.1.6</ecNumber>
    </recommendedName>
    <alternativeName>
        <fullName evidence="1">Lysyl-tRNA synthetase</fullName>
        <shortName evidence="1">LysRS</shortName>
    </alternativeName>
</protein>
<comment type="catalytic activity">
    <reaction evidence="1">
        <text>tRNA(Lys) + L-lysine + ATP = L-lysyl-tRNA(Lys) + AMP + diphosphate</text>
        <dbReference type="Rhea" id="RHEA:20792"/>
        <dbReference type="Rhea" id="RHEA-COMP:9696"/>
        <dbReference type="Rhea" id="RHEA-COMP:9697"/>
        <dbReference type="ChEBI" id="CHEBI:30616"/>
        <dbReference type="ChEBI" id="CHEBI:32551"/>
        <dbReference type="ChEBI" id="CHEBI:33019"/>
        <dbReference type="ChEBI" id="CHEBI:78442"/>
        <dbReference type="ChEBI" id="CHEBI:78529"/>
        <dbReference type="ChEBI" id="CHEBI:456215"/>
        <dbReference type="EC" id="6.1.1.6"/>
    </reaction>
</comment>
<comment type="subcellular location">
    <subcellularLocation>
        <location evidence="1">Cytoplasm</location>
    </subcellularLocation>
</comment>
<comment type="similarity">
    <text evidence="1">Belongs to the class-I aminoacyl-tRNA synthetase family.</text>
</comment>
<feature type="chain" id="PRO_0000152741" description="Lysine--tRNA ligase">
    <location>
        <begin position="1"/>
        <end position="548"/>
    </location>
</feature>
<feature type="short sequence motif" description="'HIGH' region">
    <location>
        <begin position="52"/>
        <end position="60"/>
    </location>
</feature>
<feature type="short sequence motif" description="'KMSKS' region">
    <location>
        <begin position="300"/>
        <end position="304"/>
    </location>
</feature>
<feature type="binding site" evidence="1">
    <location>
        <position position="303"/>
    </location>
    <ligand>
        <name>ATP</name>
        <dbReference type="ChEBI" id="CHEBI:30616"/>
    </ligand>
</feature>